<protein>
    <recommendedName>
        <fullName evidence="4">Branched-chain amino acid permease BrnQ</fullName>
        <shortName evidence="4">BCAA permease</shortName>
    </recommendedName>
    <alternativeName>
        <fullName>Branched-chain amino acid transport system carrier protein</fullName>
    </alternativeName>
    <alternativeName>
        <fullName>Branched-chain amino acid uptake carrier</fullName>
    </alternativeName>
</protein>
<sequence>MSKKSVLITSLMLFSMFFGAGNLIFPPMLGLSAGTNYLPAILGFLATSVLLPVLAIIAVVLSGENVKDMASRGGKIFGLVFPIAAYLSIGAFYALPRTGAVSYSTAVGVDNALYSGLFNFVFFAVALALSWNPNGIADKLGKWLTPALLTLIVVLVVLSVAKLDGTPGEPSSAYAQQPAGAGLLEGYMTMDAIAALAFGIVVISAFKYQKVNKVRTATVVSAFIAGILLALVYLGLGSIGQVVNGEFADGTAILNYAALSTMGQAGRIMFVAILILACMTTAVGLISATSEFFNSLLPGVKYHVWATVFALISFGVATMGLDTVLAVAAPVISFIYPSAITLVFLSLIEPLLFRLKWTYLFGIWTAVVWALFMSIPALNPFIEWAPLHSMSLGWVVPVLVASAIGLAIDWNKKGAQSVAKKESISV</sequence>
<accession>O06754</accession>
<reference key="1">
    <citation type="journal article" date="1998" name="Arch. Microbiol.">
        <title>Isoleucine uptake in Corynebacterium glutamicum ATCC 13032 is directed by the brnQ gene product.</title>
        <authorList>
            <person name="Tauch A."/>
            <person name="Hermann T."/>
            <person name="Burkovski A."/>
            <person name="Kraemer R."/>
            <person name="Puehler A."/>
            <person name="Kalinowski J."/>
        </authorList>
    </citation>
    <scope>NUCLEOTIDE SEQUENCE [GENOMIC DNA]</scope>
    <scope>FUNCTION AS A TRANSPORTER</scope>
    <scope>DISRUPTION PHENOTYPE</scope>
    <source>
        <strain>ATCC 13032 / DSM 20300 / JCM 1318 / BCRC 11384 / CCUG 27702 / LMG 3730 / NBRC 12168 / NCIMB 10025 / NRRL B-2784 / 534</strain>
    </source>
</reference>
<reference key="2">
    <citation type="journal article" date="2003" name="Appl. Microbiol. Biotechnol.">
        <title>The Corynebacterium glutamicum genome: features and impacts on biotechnological processes.</title>
        <authorList>
            <person name="Ikeda M."/>
            <person name="Nakagawa S."/>
        </authorList>
    </citation>
    <scope>NUCLEOTIDE SEQUENCE [LARGE SCALE GENOMIC DNA]</scope>
    <source>
        <strain>ATCC 13032 / DSM 20300 / JCM 1318 / BCRC 11384 / CCUG 27702 / LMG 3730 / NBRC 12168 / NCIMB 10025 / NRRL B-2784 / 534</strain>
    </source>
</reference>
<reference key="3">
    <citation type="journal article" date="2003" name="J. Biotechnol.">
        <title>The complete Corynebacterium glutamicum ATCC 13032 genome sequence and its impact on the production of L-aspartate-derived amino acids and vitamins.</title>
        <authorList>
            <person name="Kalinowski J."/>
            <person name="Bathe B."/>
            <person name="Bartels D."/>
            <person name="Bischoff N."/>
            <person name="Bott M."/>
            <person name="Burkovski A."/>
            <person name="Dusch N."/>
            <person name="Eggeling L."/>
            <person name="Eikmanns B.J."/>
            <person name="Gaigalat L."/>
            <person name="Goesmann A."/>
            <person name="Hartmann M."/>
            <person name="Huthmacher K."/>
            <person name="Kraemer R."/>
            <person name="Linke B."/>
            <person name="McHardy A.C."/>
            <person name="Meyer F."/>
            <person name="Moeckel B."/>
            <person name="Pfefferle W."/>
            <person name="Puehler A."/>
            <person name="Rey D.A."/>
            <person name="Rueckert C."/>
            <person name="Rupp O."/>
            <person name="Sahm H."/>
            <person name="Wendisch V.F."/>
            <person name="Wiegraebe I."/>
            <person name="Tauch A."/>
        </authorList>
    </citation>
    <scope>NUCLEOTIDE SEQUENCE [LARGE SCALE GENOMIC DNA]</scope>
    <source>
        <strain>ATCC 13032 / DSM 20300 / JCM 1318 / BCRC 11384 / CCUG 27702 / LMG 3730 / NBRC 12168 / NCIMB 10025 / NRRL B-2784 / 534</strain>
    </source>
</reference>
<dbReference type="EMBL" id="M89931">
    <property type="protein sequence ID" value="AAC18909.1"/>
    <property type="molecule type" value="Genomic_DNA"/>
</dbReference>
<dbReference type="EMBL" id="BA000036">
    <property type="protein sequence ID" value="BAB99703.1"/>
    <property type="molecule type" value="Genomic_DNA"/>
</dbReference>
<dbReference type="EMBL" id="BX927154">
    <property type="protein sequence ID" value="CAF20652.1"/>
    <property type="molecule type" value="Genomic_DNA"/>
</dbReference>
<dbReference type="RefSeq" id="NP_601509.1">
    <property type="nucleotide sequence ID" value="NC_003450.3"/>
</dbReference>
<dbReference type="RefSeq" id="WP_011015030.1">
    <property type="nucleotide sequence ID" value="NC_006958.1"/>
</dbReference>
<dbReference type="STRING" id="196627.cg2537"/>
<dbReference type="GeneID" id="1020261"/>
<dbReference type="KEGG" id="cgb:cg2537"/>
<dbReference type="KEGG" id="cgl:Cgl2310"/>
<dbReference type="PATRIC" id="fig|196627.13.peg.2243"/>
<dbReference type="eggNOG" id="COG1114">
    <property type="taxonomic scope" value="Bacteria"/>
</dbReference>
<dbReference type="HOGENOM" id="CLU_036807_0_1_11"/>
<dbReference type="OrthoDB" id="9783920at2"/>
<dbReference type="BioCyc" id="CORYNE:G18NG-11907-MONOMER"/>
<dbReference type="Proteomes" id="UP000000582">
    <property type="component" value="Chromosome"/>
</dbReference>
<dbReference type="Proteomes" id="UP000001009">
    <property type="component" value="Chromosome"/>
</dbReference>
<dbReference type="GO" id="GO:0005886">
    <property type="term" value="C:plasma membrane"/>
    <property type="evidence" value="ECO:0007669"/>
    <property type="project" value="UniProtKB-SubCell"/>
</dbReference>
<dbReference type="GO" id="GO:0015188">
    <property type="term" value="F:L-isoleucine transmembrane transporter activity"/>
    <property type="evidence" value="ECO:0007669"/>
    <property type="project" value="TreeGrafter"/>
</dbReference>
<dbReference type="GO" id="GO:0015190">
    <property type="term" value="F:L-leucine transmembrane transporter activity"/>
    <property type="evidence" value="ECO:0007669"/>
    <property type="project" value="TreeGrafter"/>
</dbReference>
<dbReference type="GO" id="GO:0005304">
    <property type="term" value="F:L-valine transmembrane transporter activity"/>
    <property type="evidence" value="ECO:0007669"/>
    <property type="project" value="TreeGrafter"/>
</dbReference>
<dbReference type="GO" id="GO:0015818">
    <property type="term" value="P:isoleucine transport"/>
    <property type="evidence" value="ECO:0007669"/>
    <property type="project" value="TreeGrafter"/>
</dbReference>
<dbReference type="GO" id="GO:0015820">
    <property type="term" value="P:L-leucine transport"/>
    <property type="evidence" value="ECO:0007669"/>
    <property type="project" value="TreeGrafter"/>
</dbReference>
<dbReference type="InterPro" id="IPR004685">
    <property type="entry name" value="Brnchd-chn_aa_trnsp_Livcs"/>
</dbReference>
<dbReference type="NCBIfam" id="TIGR00796">
    <property type="entry name" value="livcs"/>
    <property type="match status" value="1"/>
</dbReference>
<dbReference type="PANTHER" id="PTHR30588:SF0">
    <property type="entry name" value="BRANCHED-CHAIN AMINO ACID PERMEASE BRNQ"/>
    <property type="match status" value="1"/>
</dbReference>
<dbReference type="PANTHER" id="PTHR30588">
    <property type="entry name" value="BRANCHED-CHAIN AMINO ACID TRANSPORT SYSTEM 2 CARRIER PROTEIN"/>
    <property type="match status" value="1"/>
</dbReference>
<dbReference type="Pfam" id="PF05525">
    <property type="entry name" value="Branch_AA_trans"/>
    <property type="match status" value="1"/>
</dbReference>
<name>BRNQ_CORGL</name>
<feature type="chain" id="PRO_0000099772" description="Branched-chain amino acid permease BrnQ">
    <location>
        <begin position="1"/>
        <end position="426"/>
    </location>
</feature>
<feature type="transmembrane region" description="Helical" evidence="1">
    <location>
        <begin position="11"/>
        <end position="31"/>
    </location>
</feature>
<feature type="transmembrane region" description="Helical" evidence="1">
    <location>
        <begin position="41"/>
        <end position="61"/>
    </location>
</feature>
<feature type="transmembrane region" description="Helical" evidence="1">
    <location>
        <begin position="76"/>
        <end position="96"/>
    </location>
</feature>
<feature type="transmembrane region" description="Helical" evidence="1">
    <location>
        <begin position="111"/>
        <end position="131"/>
    </location>
</feature>
<feature type="transmembrane region" description="Helical" evidence="1">
    <location>
        <begin position="140"/>
        <end position="160"/>
    </location>
</feature>
<feature type="transmembrane region" description="Helical" evidence="1">
    <location>
        <begin position="186"/>
        <end position="206"/>
    </location>
</feature>
<feature type="transmembrane region" description="Helical" evidence="1">
    <location>
        <begin position="219"/>
        <end position="239"/>
    </location>
</feature>
<feature type="transmembrane region" description="Helical" evidence="1">
    <location>
        <begin position="268"/>
        <end position="288"/>
    </location>
</feature>
<feature type="transmembrane region" description="Helical" evidence="1">
    <location>
        <begin position="296"/>
        <end position="316"/>
    </location>
</feature>
<feature type="transmembrane region" description="Helical" evidence="1">
    <location>
        <begin position="324"/>
        <end position="344"/>
    </location>
</feature>
<feature type="transmembrane region" description="Helical" evidence="1">
    <location>
        <begin position="358"/>
        <end position="378"/>
    </location>
</feature>
<feature type="transmembrane region" description="Helical" evidence="1">
    <location>
        <begin position="390"/>
        <end position="410"/>
    </location>
</feature>
<feature type="sequence conflict" description="In Ref. 1; AAC18909." evidence="4" ref="1">
    <original>L</original>
    <variation>M</variation>
    <location>
        <position position="163"/>
    </location>
</feature>
<proteinExistence type="evidence at protein level"/>
<organism>
    <name type="scientific">Corynebacterium glutamicum (strain ATCC 13032 / DSM 20300 / JCM 1318 / BCRC 11384 / CCUG 27702 / LMG 3730 / NBRC 12168 / NCIMB 10025 / NRRL B-2784 / 534)</name>
    <dbReference type="NCBI Taxonomy" id="196627"/>
    <lineage>
        <taxon>Bacteria</taxon>
        <taxon>Bacillati</taxon>
        <taxon>Actinomycetota</taxon>
        <taxon>Actinomycetes</taxon>
        <taxon>Mycobacteriales</taxon>
        <taxon>Corynebacteriaceae</taxon>
        <taxon>Corynebacterium</taxon>
    </lineage>
</organism>
<keyword id="KW-0029">Amino-acid transport</keyword>
<keyword id="KW-1003">Cell membrane</keyword>
<keyword id="KW-0472">Membrane</keyword>
<keyword id="KW-1185">Reference proteome</keyword>
<keyword id="KW-0812">Transmembrane</keyword>
<keyword id="KW-1133">Transmembrane helix</keyword>
<keyword id="KW-0813">Transport</keyword>
<comment type="function">
    <text evidence="2">Branched chain amino acid transport system, which transports isoleucine.</text>
</comment>
<comment type="subcellular location">
    <subcellularLocation>
        <location evidence="4">Cell membrane</location>
        <topology evidence="1">Multi-pass membrane protein</topology>
    </subcellularLocation>
</comment>
<comment type="disruption phenotype">
    <text evidence="2">Deletion mutant shows a considerably lower isoleucine uptake rate as compared to the wild-type strain.</text>
</comment>
<comment type="similarity">
    <text evidence="4">Belongs to the branched chain amino acid transporter family.</text>
</comment>
<gene>
    <name evidence="3" type="primary">brnQ</name>
    <name type="ordered locus">Cgl2310</name>
    <name type="ordered locus">cg2537</name>
</gene>
<evidence type="ECO:0000255" key="1"/>
<evidence type="ECO:0000269" key="2">
    <source>
    </source>
</evidence>
<evidence type="ECO:0000303" key="3">
    <source>
    </source>
</evidence>
<evidence type="ECO:0000305" key="4"/>